<gene>
    <name evidence="1" type="primary">smg</name>
    <name type="ordered locus">CV_4268</name>
</gene>
<feature type="chain" id="PRO_0000209166" description="Protein Smg homolog">
    <location>
        <begin position="1"/>
        <end position="152"/>
    </location>
</feature>
<protein>
    <recommendedName>
        <fullName evidence="1">Protein Smg homolog</fullName>
    </recommendedName>
</protein>
<keyword id="KW-1185">Reference proteome</keyword>
<proteinExistence type="inferred from homology"/>
<sequence>MFDVLTYLFEQYSDPAAFGDRSALTRQLNAVGFDDDDIGEALDWLDSVGEASVEPYLGADEGSGLRIYADSELEYLSPDVRGLIQFLEDNGALSPAQREMVIDRLLELDPEDLDIDTAKLLVLMVLWAQQAELPILLGEALLEAVHGEPTMQ</sequence>
<organism>
    <name type="scientific">Chromobacterium violaceum (strain ATCC 12472 / DSM 30191 / JCM 1249 / CCUG 213 / NBRC 12614 / NCIMB 9131 / NCTC 9757 / MK)</name>
    <dbReference type="NCBI Taxonomy" id="243365"/>
    <lineage>
        <taxon>Bacteria</taxon>
        <taxon>Pseudomonadati</taxon>
        <taxon>Pseudomonadota</taxon>
        <taxon>Betaproteobacteria</taxon>
        <taxon>Neisseriales</taxon>
        <taxon>Chromobacteriaceae</taxon>
        <taxon>Chromobacterium</taxon>
    </lineage>
</organism>
<reference key="1">
    <citation type="journal article" date="2003" name="Proc. Natl. Acad. Sci. U.S.A.">
        <title>The complete genome sequence of Chromobacterium violaceum reveals remarkable and exploitable bacterial adaptability.</title>
        <authorList>
            <person name="Vasconcelos A.T.R."/>
            <person name="de Almeida D.F."/>
            <person name="Hungria M."/>
            <person name="Guimaraes C.T."/>
            <person name="Antonio R.V."/>
            <person name="Almeida F.C."/>
            <person name="de Almeida L.G.P."/>
            <person name="de Almeida R."/>
            <person name="Alves-Gomes J.A."/>
            <person name="Andrade E.M."/>
            <person name="Araripe J."/>
            <person name="de Araujo M.F.F."/>
            <person name="Astolfi-Filho S."/>
            <person name="Azevedo V."/>
            <person name="Baptista A.J."/>
            <person name="Bataus L.A.M."/>
            <person name="Batista J.S."/>
            <person name="Belo A."/>
            <person name="van den Berg C."/>
            <person name="Bogo M."/>
            <person name="Bonatto S."/>
            <person name="Bordignon J."/>
            <person name="Brigido M.M."/>
            <person name="Brito C.A."/>
            <person name="Brocchi M."/>
            <person name="Burity H.A."/>
            <person name="Camargo A.A."/>
            <person name="Cardoso D.D.P."/>
            <person name="Carneiro N.P."/>
            <person name="Carraro D.M."/>
            <person name="Carvalho C.M.B."/>
            <person name="Cascardo J.C.M."/>
            <person name="Cavada B.S."/>
            <person name="Chueire L.M.O."/>
            <person name="Creczynski-Pasa T.B."/>
            <person name="Cunha-Junior N.C."/>
            <person name="Fagundes N."/>
            <person name="Falcao C.L."/>
            <person name="Fantinatti F."/>
            <person name="Farias I.P."/>
            <person name="Felipe M.S.S."/>
            <person name="Ferrari L.P."/>
            <person name="Ferro J.A."/>
            <person name="Ferro M.I.T."/>
            <person name="Franco G.R."/>
            <person name="Freitas N.S.A."/>
            <person name="Furlan L.R."/>
            <person name="Gazzinelli R.T."/>
            <person name="Gomes E.A."/>
            <person name="Goncalves P.R."/>
            <person name="Grangeiro T.B."/>
            <person name="Grattapaglia D."/>
            <person name="Grisard E.C."/>
            <person name="Hanna E.S."/>
            <person name="Jardim S.N."/>
            <person name="Laurino J."/>
            <person name="Leoi L.C.T."/>
            <person name="Lima L.F.A."/>
            <person name="Loureiro M.F."/>
            <person name="Lyra M.C.C.P."/>
            <person name="Madeira H.M.F."/>
            <person name="Manfio G.P."/>
            <person name="Maranhao A.Q."/>
            <person name="Martins W.S."/>
            <person name="di Mauro S.M.Z."/>
            <person name="de Medeiros S.R.B."/>
            <person name="Meissner R.V."/>
            <person name="Moreira M.A.M."/>
            <person name="Nascimento F.F."/>
            <person name="Nicolas M.F."/>
            <person name="Oliveira J.G."/>
            <person name="Oliveira S.C."/>
            <person name="Paixao R.F.C."/>
            <person name="Parente J.A."/>
            <person name="Pedrosa F.O."/>
            <person name="Pena S.D.J."/>
            <person name="Pereira J.O."/>
            <person name="Pereira M."/>
            <person name="Pinto L.S.R.C."/>
            <person name="Pinto L.S."/>
            <person name="Porto J.I.R."/>
            <person name="Potrich D.P."/>
            <person name="Ramalho-Neto C.E."/>
            <person name="Reis A.M.M."/>
            <person name="Rigo L.U."/>
            <person name="Rondinelli E."/>
            <person name="Santos E.B.P."/>
            <person name="Santos F.R."/>
            <person name="Schneider M.P.C."/>
            <person name="Seuanez H.N."/>
            <person name="Silva A.M.R."/>
            <person name="da Silva A.L.C."/>
            <person name="Silva D.W."/>
            <person name="Silva R."/>
            <person name="Simoes I.C."/>
            <person name="Simon D."/>
            <person name="Soares C.M.A."/>
            <person name="Soares R.B.A."/>
            <person name="Souza E.M."/>
            <person name="Souza K.R.L."/>
            <person name="Souza R.C."/>
            <person name="Steffens M.B.R."/>
            <person name="Steindel M."/>
            <person name="Teixeira S.R."/>
            <person name="Urmenyi T."/>
            <person name="Vettore A."/>
            <person name="Wassem R."/>
            <person name="Zaha A."/>
            <person name="Simpson A.J.G."/>
        </authorList>
    </citation>
    <scope>NUCLEOTIDE SEQUENCE [LARGE SCALE GENOMIC DNA]</scope>
    <source>
        <strain>ATCC 12472 / DSM 30191 / JCM 1249 / CCUG 213 / NBRC 12614 / NCIMB 9131 / NCTC 9757 / MK</strain>
    </source>
</reference>
<accession>Q7NQ72</accession>
<dbReference type="EMBL" id="AE016825">
    <property type="protein sequence ID" value="AAQ61928.1"/>
    <property type="molecule type" value="Genomic_DNA"/>
</dbReference>
<dbReference type="RefSeq" id="WP_011137814.1">
    <property type="nucleotide sequence ID" value="NC_005085.1"/>
</dbReference>
<dbReference type="SMR" id="Q7NQ72"/>
<dbReference type="STRING" id="243365.CV_4268"/>
<dbReference type="DNASU" id="2549775"/>
<dbReference type="KEGG" id="cvi:CV_4268"/>
<dbReference type="eggNOG" id="COG2922">
    <property type="taxonomic scope" value="Bacteria"/>
</dbReference>
<dbReference type="HOGENOM" id="CLU_133242_0_0_4"/>
<dbReference type="OrthoDB" id="5297467at2"/>
<dbReference type="Proteomes" id="UP000001424">
    <property type="component" value="Chromosome"/>
</dbReference>
<dbReference type="HAMAP" id="MF_00598">
    <property type="entry name" value="Smg"/>
    <property type="match status" value="1"/>
</dbReference>
<dbReference type="InterPro" id="IPR007456">
    <property type="entry name" value="Smg"/>
</dbReference>
<dbReference type="PANTHER" id="PTHR38692">
    <property type="entry name" value="PROTEIN SMG"/>
    <property type="match status" value="1"/>
</dbReference>
<dbReference type="PANTHER" id="PTHR38692:SF1">
    <property type="entry name" value="PROTEIN SMG"/>
    <property type="match status" value="1"/>
</dbReference>
<dbReference type="Pfam" id="PF04361">
    <property type="entry name" value="DUF494"/>
    <property type="match status" value="1"/>
</dbReference>
<comment type="similarity">
    <text evidence="1">Belongs to the Smg family.</text>
</comment>
<evidence type="ECO:0000255" key="1">
    <source>
        <dbReference type="HAMAP-Rule" id="MF_00598"/>
    </source>
</evidence>
<name>SMG_CHRVO</name>